<keyword id="KW-0067">ATP-binding</keyword>
<keyword id="KW-0997">Cell inner membrane</keyword>
<keyword id="KW-1003">Cell membrane</keyword>
<keyword id="KW-0472">Membrane</keyword>
<keyword id="KW-0547">Nucleotide-binding</keyword>
<keyword id="KW-0571">Peptide transport</keyword>
<keyword id="KW-0653">Protein transport</keyword>
<keyword id="KW-1185">Reference proteome</keyword>
<keyword id="KW-1278">Translocase</keyword>
<keyword id="KW-0813">Transport</keyword>
<dbReference type="EC" id="7.4.2.6" evidence="7 8"/>
<dbReference type="EMBL" id="X05491">
    <property type="protein sequence ID" value="CAA29043.1"/>
    <property type="molecule type" value="Genomic_DNA"/>
</dbReference>
<dbReference type="EMBL" id="AE006468">
    <property type="protein sequence ID" value="AAL20660.1"/>
    <property type="molecule type" value="Genomic_DNA"/>
</dbReference>
<dbReference type="PIR" id="D29333">
    <property type="entry name" value="QREBOF"/>
</dbReference>
<dbReference type="RefSeq" id="NP_460701.1">
    <property type="nucleotide sequence ID" value="NC_003197.2"/>
</dbReference>
<dbReference type="RefSeq" id="WP_000994696.1">
    <property type="nucleotide sequence ID" value="NC_003197.2"/>
</dbReference>
<dbReference type="SMR" id="P08007"/>
<dbReference type="STRING" id="99287.STM1742"/>
<dbReference type="TCDB" id="3.A.1.5.1">
    <property type="family name" value="the atp-binding cassette (abc) superfamily"/>
</dbReference>
<dbReference type="PaxDb" id="99287-STM1742"/>
<dbReference type="GeneID" id="1253261"/>
<dbReference type="KEGG" id="stm:STM1742"/>
<dbReference type="PATRIC" id="fig|99287.12.peg.1839"/>
<dbReference type="HOGENOM" id="CLU_000604_1_23_6"/>
<dbReference type="OMA" id="QWFWQPA"/>
<dbReference type="PhylomeDB" id="P08007"/>
<dbReference type="BioCyc" id="SENT99287:STM1742-MONOMER"/>
<dbReference type="Proteomes" id="UP000001014">
    <property type="component" value="Chromosome"/>
</dbReference>
<dbReference type="GO" id="GO:0005886">
    <property type="term" value="C:plasma membrane"/>
    <property type="evidence" value="ECO:0007669"/>
    <property type="project" value="UniProtKB-SubCell"/>
</dbReference>
<dbReference type="GO" id="GO:0005524">
    <property type="term" value="F:ATP binding"/>
    <property type="evidence" value="ECO:0007669"/>
    <property type="project" value="UniProtKB-KW"/>
</dbReference>
<dbReference type="GO" id="GO:0016887">
    <property type="term" value="F:ATP hydrolysis activity"/>
    <property type="evidence" value="ECO:0007669"/>
    <property type="project" value="InterPro"/>
</dbReference>
<dbReference type="GO" id="GO:0015833">
    <property type="term" value="P:peptide transport"/>
    <property type="evidence" value="ECO:0007669"/>
    <property type="project" value="UniProtKB-KW"/>
</dbReference>
<dbReference type="GO" id="GO:0015031">
    <property type="term" value="P:protein transport"/>
    <property type="evidence" value="ECO:0007669"/>
    <property type="project" value="UniProtKB-KW"/>
</dbReference>
<dbReference type="GO" id="GO:0055085">
    <property type="term" value="P:transmembrane transport"/>
    <property type="evidence" value="ECO:0007669"/>
    <property type="project" value="UniProtKB-ARBA"/>
</dbReference>
<dbReference type="CDD" id="cd03257">
    <property type="entry name" value="ABC_NikE_OppD_transporters"/>
    <property type="match status" value="1"/>
</dbReference>
<dbReference type="FunFam" id="3.40.50.300:FF:000016">
    <property type="entry name" value="Oligopeptide ABC transporter ATP-binding component"/>
    <property type="match status" value="1"/>
</dbReference>
<dbReference type="Gene3D" id="3.40.50.300">
    <property type="entry name" value="P-loop containing nucleotide triphosphate hydrolases"/>
    <property type="match status" value="1"/>
</dbReference>
<dbReference type="InterPro" id="IPR003593">
    <property type="entry name" value="AAA+_ATPase"/>
</dbReference>
<dbReference type="InterPro" id="IPR050319">
    <property type="entry name" value="ABC_transp_ATP-bind"/>
</dbReference>
<dbReference type="InterPro" id="IPR003439">
    <property type="entry name" value="ABC_transporter-like_ATP-bd"/>
</dbReference>
<dbReference type="InterPro" id="IPR017871">
    <property type="entry name" value="ABC_transporter-like_CS"/>
</dbReference>
<dbReference type="InterPro" id="IPR013563">
    <property type="entry name" value="Oligopep_ABC_C"/>
</dbReference>
<dbReference type="InterPro" id="IPR027417">
    <property type="entry name" value="P-loop_NTPase"/>
</dbReference>
<dbReference type="NCBIfam" id="TIGR01727">
    <property type="entry name" value="oligo_HPY"/>
    <property type="match status" value="1"/>
</dbReference>
<dbReference type="NCBIfam" id="NF008453">
    <property type="entry name" value="PRK11308.1"/>
    <property type="match status" value="1"/>
</dbReference>
<dbReference type="NCBIfam" id="NF011659">
    <property type="entry name" value="PRK15079.1"/>
    <property type="match status" value="1"/>
</dbReference>
<dbReference type="PANTHER" id="PTHR43776:SF7">
    <property type="entry name" value="D,D-DIPEPTIDE TRANSPORT ATP-BINDING PROTEIN DDPF-RELATED"/>
    <property type="match status" value="1"/>
</dbReference>
<dbReference type="PANTHER" id="PTHR43776">
    <property type="entry name" value="TRANSPORT ATP-BINDING PROTEIN"/>
    <property type="match status" value="1"/>
</dbReference>
<dbReference type="Pfam" id="PF00005">
    <property type="entry name" value="ABC_tran"/>
    <property type="match status" value="1"/>
</dbReference>
<dbReference type="Pfam" id="PF08352">
    <property type="entry name" value="oligo_HPY"/>
    <property type="match status" value="1"/>
</dbReference>
<dbReference type="SMART" id="SM00382">
    <property type="entry name" value="AAA"/>
    <property type="match status" value="1"/>
</dbReference>
<dbReference type="SUPFAM" id="SSF52540">
    <property type="entry name" value="P-loop containing nucleoside triphosphate hydrolases"/>
    <property type="match status" value="1"/>
</dbReference>
<dbReference type="PROSITE" id="PS00211">
    <property type="entry name" value="ABC_TRANSPORTER_1"/>
    <property type="match status" value="1"/>
</dbReference>
<dbReference type="PROSITE" id="PS50893">
    <property type="entry name" value="ABC_TRANSPORTER_2"/>
    <property type="match status" value="1"/>
</dbReference>
<feature type="chain" id="PRO_0000092672" description="Oligopeptide transport ATP-binding protein OppF">
    <location>
        <begin position="1"/>
        <end position="334"/>
    </location>
</feature>
<feature type="domain" description="ABC transporter" evidence="1">
    <location>
        <begin position="12"/>
        <end position="265"/>
    </location>
</feature>
<feature type="binding site" evidence="1">
    <location>
        <begin position="57"/>
        <end position="64"/>
    </location>
    <ligand>
        <name>ATP</name>
        <dbReference type="ChEBI" id="CHEBI:30616"/>
    </ligand>
</feature>
<feature type="sequence conflict" description="In Ref. 1; CAA29043." evidence="6" ref="1">
    <original>EP</original>
    <variation>DA</variation>
    <location>
        <begin position="190"/>
        <end position="191"/>
    </location>
</feature>
<gene>
    <name evidence="5" type="primary">oppF</name>
    <name type="ordered locus">STM1742</name>
</gene>
<comment type="function">
    <text evidence="2 3 4">Part of the ABC transporter complex OppABCDF involved in the uptake of oligopeptides, including the cell wall murein tripeptide L-alanyl-gamma-D-glutamyl-meso-diaminopimelate (PubMed:2821267, PubMed:3301822). Probably responsible for energy coupling to the transport system (PubMed:2651120). Plays an important nutritional role and is involved in the recycling of cell wall peptides (PubMed:2821267, PubMed:3301822).</text>
</comment>
<comment type="catalytic activity">
    <reaction evidence="7">
        <text>a [peptide](out) + ATP + H2O = a [peptide](in) + ADP + phosphate + H(+)</text>
        <dbReference type="Rhea" id="RHEA:78459"/>
        <dbReference type="Rhea" id="RHEA-COMP:19083"/>
        <dbReference type="ChEBI" id="CHEBI:15377"/>
        <dbReference type="ChEBI" id="CHEBI:15378"/>
        <dbReference type="ChEBI" id="CHEBI:30616"/>
        <dbReference type="ChEBI" id="CHEBI:33710"/>
        <dbReference type="ChEBI" id="CHEBI:43474"/>
        <dbReference type="ChEBI" id="CHEBI:456216"/>
        <dbReference type="EC" id="7.4.2.6"/>
    </reaction>
    <physiologicalReaction direction="left-to-right" evidence="7">
        <dbReference type="Rhea" id="RHEA:78460"/>
    </physiologicalReaction>
</comment>
<comment type="catalytic activity">
    <reaction evidence="8">
        <text>L-alanyl-gamma-D-glutamyl-meso-2,6-diaminopimelate(out) + ATP + H2O = L-alanyl-gamma-D-glutamyl-meso-2,6-diaminopimelate(in) + ADP + phosphate + H(+)</text>
        <dbReference type="Rhea" id="RHEA:29763"/>
        <dbReference type="ChEBI" id="CHEBI:15377"/>
        <dbReference type="ChEBI" id="CHEBI:15378"/>
        <dbReference type="ChEBI" id="CHEBI:30616"/>
        <dbReference type="ChEBI" id="CHEBI:43474"/>
        <dbReference type="ChEBI" id="CHEBI:61401"/>
        <dbReference type="ChEBI" id="CHEBI:456216"/>
    </reaction>
    <physiologicalReaction direction="left-to-right" evidence="8">
        <dbReference type="Rhea" id="RHEA:29764"/>
    </physiologicalReaction>
</comment>
<comment type="subunit">
    <text evidence="3">The complex is composed of two ATP-binding proteins (OppD and OppF), two transmembrane proteins (OppB and OppC) and a solute-binding protein (OppA).</text>
</comment>
<comment type="subcellular location">
    <subcellularLocation>
        <location evidence="2">Cell inner membrane</location>
        <topology evidence="2">Peripheral membrane protein</topology>
        <orientation evidence="2">Cytoplasmic side</orientation>
    </subcellularLocation>
</comment>
<comment type="induction">
    <text evidence="3">Part of the opp operon, which is constitutively expressed.</text>
</comment>
<comment type="similarity">
    <text evidence="6">Belongs to the ABC transporter superfamily.</text>
</comment>
<protein>
    <recommendedName>
        <fullName evidence="6">Oligopeptide transport ATP-binding protein OppF</fullName>
        <ecNumber evidence="7 8">7.4.2.6</ecNumber>
    </recommendedName>
</protein>
<name>OPPF_SALTY</name>
<proteinExistence type="evidence at protein level"/>
<sequence>MNAVIEQRKVLLEIADLKVHFDIKEGKQWFWQPPKTLKAVDGVTLRLYEGETLGVVGESGCGKSTFARAIIGLVKATDGKVAWLGKDLLGMKADEWREVRSDIQMIFQDPLASLNPRMTIGEIIAEPLRTYHPKLSRQDVRDRVKAMMLKVGLLPNLINRYPHEFSGGQCQRIGIARALILEPKLIICDEPVSALDVSIQAQVVNLLQQLQREMGLSLIFIAHDLAVVKHISDRVLVMYLGHAVELGTYDEVYHNPLHPYTKALMSAVPIPDPDLERNKKIQLLEGELPSPINPPSGCVFRTRCPIAGPECAQTRPVLEGSFRHAVSCLKVDPL</sequence>
<evidence type="ECO:0000255" key="1">
    <source>
        <dbReference type="PROSITE-ProRule" id="PRU00434"/>
    </source>
</evidence>
<evidence type="ECO:0000269" key="2">
    <source>
    </source>
</evidence>
<evidence type="ECO:0000269" key="3">
    <source>
    </source>
</evidence>
<evidence type="ECO:0000269" key="4">
    <source>
    </source>
</evidence>
<evidence type="ECO:0000303" key="5">
    <source>
    </source>
</evidence>
<evidence type="ECO:0000305" key="6"/>
<evidence type="ECO:0000305" key="7">
    <source>
    </source>
</evidence>
<evidence type="ECO:0000305" key="8">
    <source>
    </source>
</evidence>
<reference key="1">
    <citation type="journal article" date="1987" name="J. Mol. Biol.">
        <title>Molecular characterization of the oligopeptide permease of Salmonella typhimurium.</title>
        <authorList>
            <person name="Hiles I.D."/>
            <person name="Gallagher M.P."/>
            <person name="Jamieson D.J."/>
            <person name="Higgins C.F."/>
        </authorList>
    </citation>
    <scope>NUCLEOTIDE SEQUENCE [GENOMIC DNA]</scope>
    <scope>FUNCTION</scope>
    <scope>SUBUNIT</scope>
    <scope>INDUCTION</scope>
    <source>
        <strain>LT2</strain>
    </source>
</reference>
<reference key="2">
    <citation type="journal article" date="2001" name="Nature">
        <title>Complete genome sequence of Salmonella enterica serovar Typhimurium LT2.</title>
        <authorList>
            <person name="McClelland M."/>
            <person name="Sanderson K.E."/>
            <person name="Spieth J."/>
            <person name="Clifton S.W."/>
            <person name="Latreille P."/>
            <person name="Courtney L."/>
            <person name="Porwollik S."/>
            <person name="Ali J."/>
            <person name="Dante M."/>
            <person name="Du F."/>
            <person name="Hou S."/>
            <person name="Layman D."/>
            <person name="Leonard S."/>
            <person name="Nguyen C."/>
            <person name="Scott K."/>
            <person name="Holmes A."/>
            <person name="Grewal N."/>
            <person name="Mulvaney E."/>
            <person name="Ryan E."/>
            <person name="Sun H."/>
            <person name="Florea L."/>
            <person name="Miller W."/>
            <person name="Stoneking T."/>
            <person name="Nhan M."/>
            <person name="Waterston R."/>
            <person name="Wilson R.K."/>
        </authorList>
    </citation>
    <scope>NUCLEOTIDE SEQUENCE [LARGE SCALE GENOMIC DNA]</scope>
    <source>
        <strain>LT2 / SGSC1412 / ATCC 700720</strain>
    </source>
</reference>
<reference key="3">
    <citation type="journal article" date="1989" name="Eur. J. Biochem.">
        <title>Identification and localization of the membrane-associated, ATP-binding subunit of the oligopeptide permease of Salmonella typhimurium.</title>
        <authorList>
            <person name="Gallagher M.P."/>
            <person name="Pearce S.R."/>
            <person name="Higgins C.F."/>
        </authorList>
    </citation>
    <scope>FUNCTION</scope>
    <scope>SUBCELLULAR LOCATION</scope>
</reference>
<reference key="4">
    <citation type="journal article" date="1987" name="J. Bacteriol.">
        <title>Uptake of cell wall peptides by Salmonella typhimurium and Escherichia coli.</title>
        <authorList>
            <person name="Goodell E.W."/>
            <person name="Higgins C.F."/>
        </authorList>
    </citation>
    <scope>FUNCTION</scope>
    <source>
        <strain>LT2</strain>
    </source>
</reference>
<accession>P08007</accession>
<organism>
    <name type="scientific">Salmonella typhimurium (strain LT2 / SGSC1412 / ATCC 700720)</name>
    <dbReference type="NCBI Taxonomy" id="99287"/>
    <lineage>
        <taxon>Bacteria</taxon>
        <taxon>Pseudomonadati</taxon>
        <taxon>Pseudomonadota</taxon>
        <taxon>Gammaproteobacteria</taxon>
        <taxon>Enterobacterales</taxon>
        <taxon>Enterobacteriaceae</taxon>
        <taxon>Salmonella</taxon>
    </lineage>
</organism>